<reference key="1">
    <citation type="journal article" date="2008" name="J. Bacteriol.">
        <title>Complete genome sequence of uropathogenic Proteus mirabilis, a master of both adherence and motility.</title>
        <authorList>
            <person name="Pearson M.M."/>
            <person name="Sebaihia M."/>
            <person name="Churcher C."/>
            <person name="Quail M.A."/>
            <person name="Seshasayee A.S."/>
            <person name="Luscombe N.M."/>
            <person name="Abdellah Z."/>
            <person name="Arrosmith C."/>
            <person name="Atkin B."/>
            <person name="Chillingworth T."/>
            <person name="Hauser H."/>
            <person name="Jagels K."/>
            <person name="Moule S."/>
            <person name="Mungall K."/>
            <person name="Norbertczak H."/>
            <person name="Rabbinowitsch E."/>
            <person name="Walker D."/>
            <person name="Whithead S."/>
            <person name="Thomson N.R."/>
            <person name="Rather P.N."/>
            <person name="Parkhill J."/>
            <person name="Mobley H.L.T."/>
        </authorList>
    </citation>
    <scope>NUCLEOTIDE SEQUENCE [LARGE SCALE GENOMIC DNA]</scope>
    <source>
        <strain>HI4320</strain>
    </source>
</reference>
<organism>
    <name type="scientific">Proteus mirabilis (strain HI4320)</name>
    <dbReference type="NCBI Taxonomy" id="529507"/>
    <lineage>
        <taxon>Bacteria</taxon>
        <taxon>Pseudomonadati</taxon>
        <taxon>Pseudomonadota</taxon>
        <taxon>Gammaproteobacteria</taxon>
        <taxon>Enterobacterales</taxon>
        <taxon>Morganellaceae</taxon>
        <taxon>Proteus</taxon>
    </lineage>
</organism>
<proteinExistence type="inferred from homology"/>
<dbReference type="EC" id="3.5.4.25" evidence="1"/>
<dbReference type="EMBL" id="AM942759">
    <property type="protein sequence ID" value="CAR42788.1"/>
    <property type="molecule type" value="Genomic_DNA"/>
</dbReference>
<dbReference type="RefSeq" id="WP_004243033.1">
    <property type="nucleotide sequence ID" value="NC_010554.1"/>
</dbReference>
<dbReference type="SMR" id="B4EW08"/>
<dbReference type="EnsemblBacteria" id="CAR42788">
    <property type="protein sequence ID" value="CAR42788"/>
    <property type="gene ID" value="PMI1317"/>
</dbReference>
<dbReference type="GeneID" id="6800646"/>
<dbReference type="KEGG" id="pmr:PMI1317"/>
<dbReference type="eggNOG" id="COG0807">
    <property type="taxonomic scope" value="Bacteria"/>
</dbReference>
<dbReference type="HOGENOM" id="CLU_020273_2_1_6"/>
<dbReference type="UniPathway" id="UPA00275">
    <property type="reaction ID" value="UER00400"/>
</dbReference>
<dbReference type="Proteomes" id="UP000008319">
    <property type="component" value="Chromosome"/>
</dbReference>
<dbReference type="GO" id="GO:0005829">
    <property type="term" value="C:cytosol"/>
    <property type="evidence" value="ECO:0007669"/>
    <property type="project" value="TreeGrafter"/>
</dbReference>
<dbReference type="GO" id="GO:0005525">
    <property type="term" value="F:GTP binding"/>
    <property type="evidence" value="ECO:0007669"/>
    <property type="project" value="UniProtKB-KW"/>
</dbReference>
<dbReference type="GO" id="GO:0003935">
    <property type="term" value="F:GTP cyclohydrolase II activity"/>
    <property type="evidence" value="ECO:0007669"/>
    <property type="project" value="UniProtKB-UniRule"/>
</dbReference>
<dbReference type="GO" id="GO:0008270">
    <property type="term" value="F:zinc ion binding"/>
    <property type="evidence" value="ECO:0007669"/>
    <property type="project" value="UniProtKB-UniRule"/>
</dbReference>
<dbReference type="GO" id="GO:0009231">
    <property type="term" value="P:riboflavin biosynthetic process"/>
    <property type="evidence" value="ECO:0007669"/>
    <property type="project" value="UniProtKB-UniRule"/>
</dbReference>
<dbReference type="CDD" id="cd00641">
    <property type="entry name" value="GTP_cyclohydro2"/>
    <property type="match status" value="1"/>
</dbReference>
<dbReference type="FunFam" id="3.40.50.10990:FF:000002">
    <property type="entry name" value="GTP cyclohydrolase-2"/>
    <property type="match status" value="1"/>
</dbReference>
<dbReference type="Gene3D" id="3.40.50.10990">
    <property type="entry name" value="GTP cyclohydrolase II"/>
    <property type="match status" value="1"/>
</dbReference>
<dbReference type="HAMAP" id="MF_00179">
    <property type="entry name" value="RibA"/>
    <property type="match status" value="1"/>
</dbReference>
<dbReference type="InterPro" id="IPR032677">
    <property type="entry name" value="GTP_cyclohydro_II"/>
</dbReference>
<dbReference type="InterPro" id="IPR000926">
    <property type="entry name" value="RibA"/>
</dbReference>
<dbReference type="InterPro" id="IPR036144">
    <property type="entry name" value="RibA-like_sf"/>
</dbReference>
<dbReference type="NCBIfam" id="NF001591">
    <property type="entry name" value="PRK00393.1"/>
    <property type="match status" value="1"/>
</dbReference>
<dbReference type="NCBIfam" id="TIGR00505">
    <property type="entry name" value="ribA"/>
    <property type="match status" value="1"/>
</dbReference>
<dbReference type="PANTHER" id="PTHR21327:SF18">
    <property type="entry name" value="3,4-DIHYDROXY-2-BUTANONE 4-PHOSPHATE SYNTHASE"/>
    <property type="match status" value="1"/>
</dbReference>
<dbReference type="PANTHER" id="PTHR21327">
    <property type="entry name" value="GTP CYCLOHYDROLASE II-RELATED"/>
    <property type="match status" value="1"/>
</dbReference>
<dbReference type="Pfam" id="PF00925">
    <property type="entry name" value="GTP_cyclohydro2"/>
    <property type="match status" value="1"/>
</dbReference>
<dbReference type="SUPFAM" id="SSF142695">
    <property type="entry name" value="RibA-like"/>
    <property type="match status" value="1"/>
</dbReference>
<feature type="chain" id="PRO_1000098270" description="GTP cyclohydrolase-2">
    <location>
        <begin position="1"/>
        <end position="199"/>
    </location>
</feature>
<feature type="active site" description="Proton acceptor" evidence="1">
    <location>
        <position position="126"/>
    </location>
</feature>
<feature type="active site" description="Nucleophile" evidence="1">
    <location>
        <position position="128"/>
    </location>
</feature>
<feature type="binding site" evidence="1">
    <location>
        <begin position="49"/>
        <end position="53"/>
    </location>
    <ligand>
        <name>GTP</name>
        <dbReference type="ChEBI" id="CHEBI:37565"/>
    </ligand>
</feature>
<feature type="binding site" evidence="1">
    <location>
        <position position="54"/>
    </location>
    <ligand>
        <name>Zn(2+)</name>
        <dbReference type="ChEBI" id="CHEBI:29105"/>
        <note>catalytic</note>
    </ligand>
</feature>
<feature type="binding site" evidence="1">
    <location>
        <position position="65"/>
    </location>
    <ligand>
        <name>Zn(2+)</name>
        <dbReference type="ChEBI" id="CHEBI:29105"/>
        <note>catalytic</note>
    </ligand>
</feature>
<feature type="binding site" evidence="1">
    <location>
        <position position="67"/>
    </location>
    <ligand>
        <name>Zn(2+)</name>
        <dbReference type="ChEBI" id="CHEBI:29105"/>
        <note>catalytic</note>
    </ligand>
</feature>
<feature type="binding site" evidence="1">
    <location>
        <position position="70"/>
    </location>
    <ligand>
        <name>GTP</name>
        <dbReference type="ChEBI" id="CHEBI:37565"/>
    </ligand>
</feature>
<feature type="binding site" evidence="1">
    <location>
        <begin position="92"/>
        <end position="94"/>
    </location>
    <ligand>
        <name>GTP</name>
        <dbReference type="ChEBI" id="CHEBI:37565"/>
    </ligand>
</feature>
<feature type="binding site" evidence="1">
    <location>
        <position position="114"/>
    </location>
    <ligand>
        <name>GTP</name>
        <dbReference type="ChEBI" id="CHEBI:37565"/>
    </ligand>
</feature>
<feature type="binding site" evidence="1">
    <location>
        <position position="149"/>
    </location>
    <ligand>
        <name>GTP</name>
        <dbReference type="ChEBI" id="CHEBI:37565"/>
    </ligand>
</feature>
<feature type="binding site" evidence="1">
    <location>
        <position position="154"/>
    </location>
    <ligand>
        <name>GTP</name>
        <dbReference type="ChEBI" id="CHEBI:37565"/>
    </ligand>
</feature>
<keyword id="KW-0342">GTP-binding</keyword>
<keyword id="KW-0378">Hydrolase</keyword>
<keyword id="KW-0479">Metal-binding</keyword>
<keyword id="KW-0547">Nucleotide-binding</keyword>
<keyword id="KW-1185">Reference proteome</keyword>
<keyword id="KW-0686">Riboflavin biosynthesis</keyword>
<keyword id="KW-0862">Zinc</keyword>
<evidence type="ECO:0000255" key="1">
    <source>
        <dbReference type="HAMAP-Rule" id="MF_00179"/>
    </source>
</evidence>
<name>RIBA_PROMH</name>
<sequence>MKLRRIAEAKLPTPFGEFLMVGFEEIATGKDHVALVFGDISGTKPVLSRIHSECLTGDALFSLRCDCGFQLEAALSQISKEGRGVLLYHRQEGRNIGLLNKIRAYALQDQGLDTVEANLKLGFKADERDFTLCADMYNLLGIHEVRLLTNNPKKIEIMKEAGINVVERVPLIVGRNPSNAHYLDTKADKMGHMLFKKAQ</sequence>
<accession>B4EW08</accession>
<comment type="function">
    <text evidence="1">Catalyzes the conversion of GTP to 2,5-diamino-6-ribosylamino-4(3H)-pyrimidinone 5'-phosphate (DARP), formate and pyrophosphate.</text>
</comment>
<comment type="catalytic activity">
    <reaction evidence="1">
        <text>GTP + 4 H2O = 2,5-diamino-6-hydroxy-4-(5-phosphoribosylamino)-pyrimidine + formate + 2 phosphate + 3 H(+)</text>
        <dbReference type="Rhea" id="RHEA:23704"/>
        <dbReference type="ChEBI" id="CHEBI:15377"/>
        <dbReference type="ChEBI" id="CHEBI:15378"/>
        <dbReference type="ChEBI" id="CHEBI:15740"/>
        <dbReference type="ChEBI" id="CHEBI:37565"/>
        <dbReference type="ChEBI" id="CHEBI:43474"/>
        <dbReference type="ChEBI" id="CHEBI:58614"/>
        <dbReference type="EC" id="3.5.4.25"/>
    </reaction>
</comment>
<comment type="cofactor">
    <cofactor evidence="1">
        <name>Zn(2+)</name>
        <dbReference type="ChEBI" id="CHEBI:29105"/>
    </cofactor>
    <text evidence="1">Binds 1 zinc ion per subunit.</text>
</comment>
<comment type="pathway">
    <text evidence="1">Cofactor biosynthesis; riboflavin biosynthesis; 5-amino-6-(D-ribitylamino)uracil from GTP: step 1/4.</text>
</comment>
<comment type="subunit">
    <text evidence="1">Homodimer.</text>
</comment>
<comment type="similarity">
    <text evidence="1">Belongs to the GTP cyclohydrolase II family.</text>
</comment>
<gene>
    <name evidence="1" type="primary">ribA</name>
    <name type="ordered locus">PMI1317</name>
</gene>
<protein>
    <recommendedName>
        <fullName evidence="1">GTP cyclohydrolase-2</fullName>
        <ecNumber evidence="1">3.5.4.25</ecNumber>
    </recommendedName>
    <alternativeName>
        <fullName evidence="1">GTP cyclohydrolase II</fullName>
    </alternativeName>
</protein>